<evidence type="ECO:0000255" key="1">
    <source>
        <dbReference type="HAMAP-Rule" id="MF_00455"/>
    </source>
</evidence>
<dbReference type="EC" id="5.3.1.5" evidence="1"/>
<dbReference type="EMBL" id="CP000857">
    <property type="protein sequence ID" value="ACN47818.1"/>
    <property type="molecule type" value="Genomic_DNA"/>
</dbReference>
<dbReference type="RefSeq" id="WP_001149561.1">
    <property type="nucleotide sequence ID" value="NC_012125.1"/>
</dbReference>
<dbReference type="SMR" id="C0Q1C2"/>
<dbReference type="KEGG" id="sei:SPC_3740"/>
<dbReference type="HOGENOM" id="CLU_037261_1_0_6"/>
<dbReference type="Proteomes" id="UP000001599">
    <property type="component" value="Chromosome"/>
</dbReference>
<dbReference type="GO" id="GO:0005737">
    <property type="term" value="C:cytoplasm"/>
    <property type="evidence" value="ECO:0007669"/>
    <property type="project" value="UniProtKB-SubCell"/>
</dbReference>
<dbReference type="GO" id="GO:0000287">
    <property type="term" value="F:magnesium ion binding"/>
    <property type="evidence" value="ECO:0007669"/>
    <property type="project" value="UniProtKB-UniRule"/>
</dbReference>
<dbReference type="GO" id="GO:0009045">
    <property type="term" value="F:xylose isomerase activity"/>
    <property type="evidence" value="ECO:0007669"/>
    <property type="project" value="UniProtKB-UniRule"/>
</dbReference>
<dbReference type="GO" id="GO:0042732">
    <property type="term" value="P:D-xylose metabolic process"/>
    <property type="evidence" value="ECO:0007669"/>
    <property type="project" value="UniProtKB-UniRule"/>
</dbReference>
<dbReference type="FunFam" id="3.20.20.150:FF:000002">
    <property type="entry name" value="Xylose isomerase"/>
    <property type="match status" value="1"/>
</dbReference>
<dbReference type="Gene3D" id="3.20.20.150">
    <property type="entry name" value="Divalent-metal-dependent TIM barrel enzymes"/>
    <property type="match status" value="1"/>
</dbReference>
<dbReference type="HAMAP" id="MF_00455">
    <property type="entry name" value="Xylose_isom_A"/>
    <property type="match status" value="1"/>
</dbReference>
<dbReference type="InterPro" id="IPR036237">
    <property type="entry name" value="Xyl_isomerase-like_sf"/>
</dbReference>
<dbReference type="InterPro" id="IPR013452">
    <property type="entry name" value="Xylose_isom_bac"/>
</dbReference>
<dbReference type="InterPro" id="IPR001998">
    <property type="entry name" value="Xylose_isomerase"/>
</dbReference>
<dbReference type="NCBIfam" id="NF003998">
    <property type="entry name" value="PRK05474.1"/>
    <property type="match status" value="1"/>
</dbReference>
<dbReference type="NCBIfam" id="TIGR02630">
    <property type="entry name" value="xylose_isom_A"/>
    <property type="match status" value="1"/>
</dbReference>
<dbReference type="PANTHER" id="PTHR48408">
    <property type="match status" value="1"/>
</dbReference>
<dbReference type="PANTHER" id="PTHR48408:SF1">
    <property type="entry name" value="XYLOSE ISOMERASE"/>
    <property type="match status" value="1"/>
</dbReference>
<dbReference type="PRINTS" id="PR00688">
    <property type="entry name" value="XYLOSISMRASE"/>
</dbReference>
<dbReference type="SUPFAM" id="SSF51658">
    <property type="entry name" value="Xylose isomerase-like"/>
    <property type="match status" value="1"/>
</dbReference>
<dbReference type="PROSITE" id="PS51415">
    <property type="entry name" value="XYLOSE_ISOMERASE"/>
    <property type="match status" value="1"/>
</dbReference>
<sequence length="440" mass="49701">MQAYFDQLDRVRYEGPQSTNPLAFRHYNPDELVLGKRMEDHLRFAACYWHTFCWNGADMFGVGAFNRPWQQPGEALELAKRKADVAFEFFHKLNVPFYCFHDVDVSPEGASLKEYKNNFAQMVDVLAAKQEQSGVKLLWGTANCFTNPRYGAGAATNPDPEVFSWAATQVVTAMNATHKLGGENYVLWGGREGYETLLNTDLRQEREQIGRFMQMVVEHKHKMGFQGTLLIEPKPQEPTKHQYDYDVATVYGFLKQFGLEKEIKVNIEANHATLAGHSFHHEIATAIALGIFGSVDANRGDAQLGWDTDQFPISVEENALVMYEILKAGGFTTGGLNFDAKVRRQSTDKYDLFYGHIGAMDTMALSLKIAARMVEDGELDKRVAKRYAGWNGELGQQILKGQLSLGELAQYAEQHNLAPVHQSGHQELLENLVNRYLFDK</sequence>
<proteinExistence type="inferred from homology"/>
<protein>
    <recommendedName>
        <fullName evidence="1">Xylose isomerase</fullName>
        <ecNumber evidence="1">5.3.1.5</ecNumber>
    </recommendedName>
</protein>
<accession>C0Q1C2</accession>
<feature type="chain" id="PRO_1000200309" description="Xylose isomerase">
    <location>
        <begin position="1"/>
        <end position="440"/>
    </location>
</feature>
<feature type="binding site" evidence="1">
    <location>
        <position position="307"/>
    </location>
    <ligand>
        <name>Mg(2+)</name>
        <dbReference type="ChEBI" id="CHEBI:18420"/>
        <label>2</label>
    </ligand>
</feature>
<feature type="binding site" evidence="1">
    <location>
        <position position="309"/>
    </location>
    <ligand>
        <name>Mg(2+)</name>
        <dbReference type="ChEBI" id="CHEBI:18420"/>
        <label>2</label>
    </ligand>
</feature>
<comment type="catalytic activity">
    <reaction evidence="1">
        <text>alpha-D-xylose = alpha-D-xylulofuranose</text>
        <dbReference type="Rhea" id="RHEA:22816"/>
        <dbReference type="ChEBI" id="CHEBI:28518"/>
        <dbReference type="ChEBI" id="CHEBI:188998"/>
        <dbReference type="EC" id="5.3.1.5"/>
    </reaction>
</comment>
<comment type="cofactor">
    <cofactor evidence="1">
        <name>Mg(2+)</name>
        <dbReference type="ChEBI" id="CHEBI:18420"/>
    </cofactor>
    <text evidence="1">Binds 2 magnesium ions per subunit.</text>
</comment>
<comment type="subunit">
    <text evidence="1">Homotetramer.</text>
</comment>
<comment type="subcellular location">
    <subcellularLocation>
        <location evidence="1">Cytoplasm</location>
    </subcellularLocation>
</comment>
<comment type="similarity">
    <text evidence="1">Belongs to the xylose isomerase family.</text>
</comment>
<keyword id="KW-0119">Carbohydrate metabolism</keyword>
<keyword id="KW-0963">Cytoplasm</keyword>
<keyword id="KW-0413">Isomerase</keyword>
<keyword id="KW-0460">Magnesium</keyword>
<keyword id="KW-0479">Metal-binding</keyword>
<keyword id="KW-0859">Xylose metabolism</keyword>
<gene>
    <name evidence="1" type="primary">xylA</name>
    <name type="ordered locus">SPC_3740</name>
</gene>
<organism>
    <name type="scientific">Salmonella paratyphi C (strain RKS4594)</name>
    <dbReference type="NCBI Taxonomy" id="476213"/>
    <lineage>
        <taxon>Bacteria</taxon>
        <taxon>Pseudomonadati</taxon>
        <taxon>Pseudomonadota</taxon>
        <taxon>Gammaproteobacteria</taxon>
        <taxon>Enterobacterales</taxon>
        <taxon>Enterobacteriaceae</taxon>
        <taxon>Salmonella</taxon>
    </lineage>
</organism>
<name>XYLA_SALPC</name>
<reference key="1">
    <citation type="journal article" date="2009" name="PLoS ONE">
        <title>Salmonella paratyphi C: genetic divergence from Salmonella choleraesuis and pathogenic convergence with Salmonella typhi.</title>
        <authorList>
            <person name="Liu W.-Q."/>
            <person name="Feng Y."/>
            <person name="Wang Y."/>
            <person name="Zou Q.-H."/>
            <person name="Chen F."/>
            <person name="Guo J.-T."/>
            <person name="Peng Y.-H."/>
            <person name="Jin Y."/>
            <person name="Li Y.-G."/>
            <person name="Hu S.-N."/>
            <person name="Johnston R.N."/>
            <person name="Liu G.-R."/>
            <person name="Liu S.-L."/>
        </authorList>
    </citation>
    <scope>NUCLEOTIDE SEQUENCE [LARGE SCALE GENOMIC DNA]</scope>
    <source>
        <strain>RKS4594</strain>
    </source>
</reference>